<proteinExistence type="evidence at transcript level"/>
<evidence type="ECO:0000255" key="1"/>
<evidence type="ECO:0000256" key="2">
    <source>
        <dbReference type="SAM" id="MobiDB-lite"/>
    </source>
</evidence>
<evidence type="ECO:0000269" key="3">
    <source>
    </source>
</evidence>
<evidence type="ECO:0000303" key="4">
    <source>
    </source>
</evidence>
<evidence type="ECO:0000303" key="5">
    <source>
    </source>
</evidence>
<evidence type="ECO:0000303" key="6">
    <source>
    </source>
</evidence>
<evidence type="ECO:0000305" key="7"/>
<evidence type="ECO:0000312" key="8">
    <source>
        <dbReference type="HGNC" id="HGNC:31951"/>
    </source>
</evidence>
<keyword id="KW-0025">Alternative splicing</keyword>
<keyword id="KW-0325">Glycoprotein</keyword>
<keyword id="KW-0472">Membrane</keyword>
<keyword id="KW-1185">Reference proteome</keyword>
<keyword id="KW-0732">Signal</keyword>
<keyword id="KW-0812">Transmembrane</keyword>
<keyword id="KW-1133">Transmembrane helix</keyword>
<organism>
    <name type="scientific">Homo sapiens</name>
    <name type="common">Human</name>
    <dbReference type="NCBI Taxonomy" id="9606"/>
    <lineage>
        <taxon>Eukaryota</taxon>
        <taxon>Metazoa</taxon>
        <taxon>Chordata</taxon>
        <taxon>Craniata</taxon>
        <taxon>Vertebrata</taxon>
        <taxon>Euteleostomi</taxon>
        <taxon>Mammalia</taxon>
        <taxon>Eutheria</taxon>
        <taxon>Euarchontoglires</taxon>
        <taxon>Primates</taxon>
        <taxon>Haplorrhini</taxon>
        <taxon>Catarrhini</taxon>
        <taxon>Hominidae</taxon>
        <taxon>Homo</taxon>
    </lineage>
</organism>
<reference key="1">
    <citation type="journal article" date="2003" name="Gene">
        <title>Molecular characterization of a new gene, CEAL1, encoding for a carcinoembryonic antigen-like protein with a highly conserved domain of eukaryotic translation initiation factors.</title>
        <authorList>
            <person name="Scorilas A."/>
            <person name="Chiang P.M."/>
            <person name="Katsaros D."/>
            <person name="Yousef G.M."/>
            <person name="Diamandis E.P."/>
        </authorList>
    </citation>
    <scope>NUCLEOTIDE SEQUENCE [GENOMIC DNA] (ISOFORMS 1 AND 2)</scope>
    <scope>TISSUE SPECIFICITY</scope>
    <scope>HORMONAL REGULATION</scope>
</reference>
<reference key="2">
    <citation type="journal article" date="2003" name="Genome Res.">
        <title>The secreted protein discovery initiative (SPDI), a large-scale effort to identify novel human secreted and transmembrane proteins: a bioinformatics assessment.</title>
        <authorList>
            <person name="Clark H.F."/>
            <person name="Gurney A.L."/>
            <person name="Abaya E."/>
            <person name="Baker K."/>
            <person name="Baldwin D.T."/>
            <person name="Brush J."/>
            <person name="Chen J."/>
            <person name="Chow B."/>
            <person name="Chui C."/>
            <person name="Crowley C."/>
            <person name="Currell B."/>
            <person name="Deuel B."/>
            <person name="Dowd P."/>
            <person name="Eaton D."/>
            <person name="Foster J.S."/>
            <person name="Grimaldi C."/>
            <person name="Gu Q."/>
            <person name="Hass P.E."/>
            <person name="Heldens S."/>
            <person name="Huang A."/>
            <person name="Kim H.S."/>
            <person name="Klimowski L."/>
            <person name="Jin Y."/>
            <person name="Johnson S."/>
            <person name="Lee J."/>
            <person name="Lewis L."/>
            <person name="Liao D."/>
            <person name="Mark M.R."/>
            <person name="Robbie E."/>
            <person name="Sanchez C."/>
            <person name="Schoenfeld J."/>
            <person name="Seshagiri S."/>
            <person name="Simmons L."/>
            <person name="Singh J."/>
            <person name="Smith V."/>
            <person name="Stinson J."/>
            <person name="Vagts A."/>
            <person name="Vandlen R.L."/>
            <person name="Watanabe C."/>
            <person name="Wieand D."/>
            <person name="Woods K."/>
            <person name="Xie M.-H."/>
            <person name="Yansura D.G."/>
            <person name="Yi S."/>
            <person name="Yu G."/>
            <person name="Yuan J."/>
            <person name="Zhang M."/>
            <person name="Zhang Z."/>
            <person name="Goddard A.D."/>
            <person name="Wood W.I."/>
            <person name="Godowski P.J."/>
            <person name="Gray A.M."/>
        </authorList>
    </citation>
    <scope>NUCLEOTIDE SEQUENCE [LARGE SCALE MRNA] (ISOFORM 1)</scope>
</reference>
<reference key="3">
    <citation type="journal article" date="2004" name="Nat. Genet.">
        <title>Complete sequencing and characterization of 21,243 full-length human cDNAs.</title>
        <authorList>
            <person name="Ota T."/>
            <person name="Suzuki Y."/>
            <person name="Nishikawa T."/>
            <person name="Otsuki T."/>
            <person name="Sugiyama T."/>
            <person name="Irie R."/>
            <person name="Wakamatsu A."/>
            <person name="Hayashi K."/>
            <person name="Sato H."/>
            <person name="Nagai K."/>
            <person name="Kimura K."/>
            <person name="Makita H."/>
            <person name="Sekine M."/>
            <person name="Obayashi M."/>
            <person name="Nishi T."/>
            <person name="Shibahara T."/>
            <person name="Tanaka T."/>
            <person name="Ishii S."/>
            <person name="Yamamoto J."/>
            <person name="Saito K."/>
            <person name="Kawai Y."/>
            <person name="Isono Y."/>
            <person name="Nakamura Y."/>
            <person name="Nagahari K."/>
            <person name="Murakami K."/>
            <person name="Yasuda T."/>
            <person name="Iwayanagi T."/>
            <person name="Wagatsuma M."/>
            <person name="Shiratori A."/>
            <person name="Sudo H."/>
            <person name="Hosoiri T."/>
            <person name="Kaku Y."/>
            <person name="Kodaira H."/>
            <person name="Kondo H."/>
            <person name="Sugawara M."/>
            <person name="Takahashi M."/>
            <person name="Kanda K."/>
            <person name="Yokoi T."/>
            <person name="Furuya T."/>
            <person name="Kikkawa E."/>
            <person name="Omura Y."/>
            <person name="Abe K."/>
            <person name="Kamihara K."/>
            <person name="Katsuta N."/>
            <person name="Sato K."/>
            <person name="Tanikawa M."/>
            <person name="Yamazaki M."/>
            <person name="Ninomiya K."/>
            <person name="Ishibashi T."/>
            <person name="Yamashita H."/>
            <person name="Murakawa K."/>
            <person name="Fujimori K."/>
            <person name="Tanai H."/>
            <person name="Kimata M."/>
            <person name="Watanabe M."/>
            <person name="Hiraoka S."/>
            <person name="Chiba Y."/>
            <person name="Ishida S."/>
            <person name="Ono Y."/>
            <person name="Takiguchi S."/>
            <person name="Watanabe S."/>
            <person name="Yosida M."/>
            <person name="Hotuta T."/>
            <person name="Kusano J."/>
            <person name="Kanehori K."/>
            <person name="Takahashi-Fujii A."/>
            <person name="Hara H."/>
            <person name="Tanase T.-O."/>
            <person name="Nomura Y."/>
            <person name="Togiya S."/>
            <person name="Komai F."/>
            <person name="Hara R."/>
            <person name="Takeuchi K."/>
            <person name="Arita M."/>
            <person name="Imose N."/>
            <person name="Musashino K."/>
            <person name="Yuuki H."/>
            <person name="Oshima A."/>
            <person name="Sasaki N."/>
            <person name="Aotsuka S."/>
            <person name="Yoshikawa Y."/>
            <person name="Matsunawa H."/>
            <person name="Ichihara T."/>
            <person name="Shiohata N."/>
            <person name="Sano S."/>
            <person name="Moriya S."/>
            <person name="Momiyama H."/>
            <person name="Satoh N."/>
            <person name="Takami S."/>
            <person name="Terashima Y."/>
            <person name="Suzuki O."/>
            <person name="Nakagawa S."/>
            <person name="Senoh A."/>
            <person name="Mizoguchi H."/>
            <person name="Goto Y."/>
            <person name="Shimizu F."/>
            <person name="Wakebe H."/>
            <person name="Hishigaki H."/>
            <person name="Watanabe T."/>
            <person name="Sugiyama A."/>
            <person name="Takemoto M."/>
            <person name="Kawakami B."/>
            <person name="Yamazaki M."/>
            <person name="Watanabe K."/>
            <person name="Kumagai A."/>
            <person name="Itakura S."/>
            <person name="Fukuzumi Y."/>
            <person name="Fujimori Y."/>
            <person name="Komiyama M."/>
            <person name="Tashiro H."/>
            <person name="Tanigami A."/>
            <person name="Fujiwara T."/>
            <person name="Ono T."/>
            <person name="Yamada K."/>
            <person name="Fujii Y."/>
            <person name="Ozaki K."/>
            <person name="Hirao M."/>
            <person name="Ohmori Y."/>
            <person name="Kawabata A."/>
            <person name="Hikiji T."/>
            <person name="Kobatake N."/>
            <person name="Inagaki H."/>
            <person name="Ikema Y."/>
            <person name="Okamoto S."/>
            <person name="Okitani R."/>
            <person name="Kawakami T."/>
            <person name="Noguchi S."/>
            <person name="Itoh T."/>
            <person name="Shigeta K."/>
            <person name="Senba T."/>
            <person name="Matsumura K."/>
            <person name="Nakajima Y."/>
            <person name="Mizuno T."/>
            <person name="Morinaga M."/>
            <person name="Sasaki M."/>
            <person name="Togashi T."/>
            <person name="Oyama M."/>
            <person name="Hata H."/>
            <person name="Watanabe M."/>
            <person name="Komatsu T."/>
            <person name="Mizushima-Sugano J."/>
            <person name="Satoh T."/>
            <person name="Shirai Y."/>
            <person name="Takahashi Y."/>
            <person name="Nakagawa K."/>
            <person name="Okumura K."/>
            <person name="Nagase T."/>
            <person name="Nomura N."/>
            <person name="Kikuchi H."/>
            <person name="Masuho Y."/>
            <person name="Yamashita R."/>
            <person name="Nakai K."/>
            <person name="Yada T."/>
            <person name="Nakamura Y."/>
            <person name="Ohara O."/>
            <person name="Isogai T."/>
            <person name="Sugano S."/>
        </authorList>
    </citation>
    <scope>NUCLEOTIDE SEQUENCE [LARGE SCALE MRNA] (ISOFORM 3)</scope>
    <source>
        <tissue>Placenta</tissue>
    </source>
</reference>
<reference key="4">
    <citation type="journal article" date="2004" name="Nature">
        <title>The DNA sequence and biology of human chromosome 19.</title>
        <authorList>
            <person name="Grimwood J."/>
            <person name="Gordon L.A."/>
            <person name="Olsen A.S."/>
            <person name="Terry A."/>
            <person name="Schmutz J."/>
            <person name="Lamerdin J.E."/>
            <person name="Hellsten U."/>
            <person name="Goodstein D."/>
            <person name="Couronne O."/>
            <person name="Tran-Gyamfi M."/>
            <person name="Aerts A."/>
            <person name="Altherr M."/>
            <person name="Ashworth L."/>
            <person name="Bajorek E."/>
            <person name="Black S."/>
            <person name="Branscomb E."/>
            <person name="Caenepeel S."/>
            <person name="Carrano A.V."/>
            <person name="Caoile C."/>
            <person name="Chan Y.M."/>
            <person name="Christensen M."/>
            <person name="Cleland C.A."/>
            <person name="Copeland A."/>
            <person name="Dalin E."/>
            <person name="Dehal P."/>
            <person name="Denys M."/>
            <person name="Detter J.C."/>
            <person name="Escobar J."/>
            <person name="Flowers D."/>
            <person name="Fotopulos D."/>
            <person name="Garcia C."/>
            <person name="Georgescu A.M."/>
            <person name="Glavina T."/>
            <person name="Gomez M."/>
            <person name="Gonzales E."/>
            <person name="Groza M."/>
            <person name="Hammon N."/>
            <person name="Hawkins T."/>
            <person name="Haydu L."/>
            <person name="Ho I."/>
            <person name="Huang W."/>
            <person name="Israni S."/>
            <person name="Jett J."/>
            <person name="Kadner K."/>
            <person name="Kimball H."/>
            <person name="Kobayashi A."/>
            <person name="Larionov V."/>
            <person name="Leem S.-H."/>
            <person name="Lopez F."/>
            <person name="Lou Y."/>
            <person name="Lowry S."/>
            <person name="Malfatti S."/>
            <person name="Martinez D."/>
            <person name="McCready P.M."/>
            <person name="Medina C."/>
            <person name="Morgan J."/>
            <person name="Nelson K."/>
            <person name="Nolan M."/>
            <person name="Ovcharenko I."/>
            <person name="Pitluck S."/>
            <person name="Pollard M."/>
            <person name="Popkie A.P."/>
            <person name="Predki P."/>
            <person name="Quan G."/>
            <person name="Ramirez L."/>
            <person name="Rash S."/>
            <person name="Retterer J."/>
            <person name="Rodriguez A."/>
            <person name="Rogers S."/>
            <person name="Salamov A."/>
            <person name="Salazar A."/>
            <person name="She X."/>
            <person name="Smith D."/>
            <person name="Slezak T."/>
            <person name="Solovyev V."/>
            <person name="Thayer N."/>
            <person name="Tice H."/>
            <person name="Tsai M."/>
            <person name="Ustaszewska A."/>
            <person name="Vo N."/>
            <person name="Wagner M."/>
            <person name="Wheeler J."/>
            <person name="Wu K."/>
            <person name="Xie G."/>
            <person name="Yang J."/>
            <person name="Dubchak I."/>
            <person name="Furey T.S."/>
            <person name="DeJong P."/>
            <person name="Dickson M."/>
            <person name="Gordon D."/>
            <person name="Eichler E.E."/>
            <person name="Pennacchio L.A."/>
            <person name="Richardson P."/>
            <person name="Stubbs L."/>
            <person name="Rokhsar D.S."/>
            <person name="Myers R.M."/>
            <person name="Rubin E.M."/>
            <person name="Lucas S.M."/>
        </authorList>
    </citation>
    <scope>NUCLEOTIDE SEQUENCE [LARGE SCALE GENOMIC DNA]</scope>
</reference>
<reference key="5">
    <citation type="journal article" date="2004" name="Genome Res.">
        <title>The status, quality, and expansion of the NIH full-length cDNA project: the Mammalian Gene Collection (MGC).</title>
        <authorList>
            <consortium name="The MGC Project Team"/>
        </authorList>
    </citation>
    <scope>NUCLEOTIDE SEQUENCE [LARGE SCALE MRNA] (ISOFORM 3)</scope>
    <source>
        <tissue>Testis</tissue>
    </source>
</reference>
<dbReference type="EMBL" id="AF406955">
    <property type="protein sequence ID" value="AAP70002.1"/>
    <property type="status" value="ALT_INIT"/>
    <property type="molecule type" value="Genomic_DNA"/>
</dbReference>
<dbReference type="EMBL" id="AF406955">
    <property type="protein sequence ID" value="AAP70003.1"/>
    <property type="status" value="ALT_INIT"/>
    <property type="molecule type" value="Genomic_DNA"/>
</dbReference>
<dbReference type="EMBL" id="AY358394">
    <property type="protein sequence ID" value="AAQ88760.1"/>
    <property type="molecule type" value="mRNA"/>
</dbReference>
<dbReference type="EMBL" id="AK291588">
    <property type="protein sequence ID" value="BAF84277.1"/>
    <property type="molecule type" value="mRNA"/>
</dbReference>
<dbReference type="EMBL" id="AC092066">
    <property type="status" value="NOT_ANNOTATED_CDS"/>
    <property type="molecule type" value="Genomic_DNA"/>
</dbReference>
<dbReference type="EMBL" id="BC083499">
    <property type="protein sequence ID" value="AAH83499.1"/>
    <property type="molecule type" value="mRNA"/>
</dbReference>
<dbReference type="CCDS" id="CCDS12641.1">
    <molecule id="Q7Z692-1"/>
</dbReference>
<dbReference type="CCDS" id="CCDS46108.1">
    <molecule id="Q7Z692-3"/>
</dbReference>
<dbReference type="RefSeq" id="NP_001121365.1">
    <molecule id="Q7Z692-3"/>
    <property type="nucleotide sequence ID" value="NM_001127893.3"/>
</dbReference>
<dbReference type="RefSeq" id="NP_001376651.1">
    <molecule id="Q7Z692-3"/>
    <property type="nucleotide sequence ID" value="NM_001389722.1"/>
</dbReference>
<dbReference type="RefSeq" id="NP_064604.2">
    <molecule id="Q7Z692-1"/>
    <property type="nucleotide sequence ID" value="NM_020219.3"/>
</dbReference>
<dbReference type="SMR" id="Q7Z692"/>
<dbReference type="BioGRID" id="121290">
    <property type="interactions" value="1"/>
</dbReference>
<dbReference type="FunCoup" id="Q7Z692">
    <property type="interactions" value="92"/>
</dbReference>
<dbReference type="IntAct" id="Q7Z692">
    <property type="interactions" value="1"/>
</dbReference>
<dbReference type="STRING" id="9606.ENSP00000384887"/>
<dbReference type="GlyCosmos" id="Q7Z692">
    <property type="glycosylation" value="1 site, No reported glycans"/>
</dbReference>
<dbReference type="GlyGen" id="Q7Z692">
    <property type="glycosylation" value="3 sites, 3 N-linked glycans (1 site)"/>
</dbReference>
<dbReference type="iPTMnet" id="Q7Z692"/>
<dbReference type="PhosphoSitePlus" id="Q7Z692"/>
<dbReference type="BioMuta" id="CEACAM19"/>
<dbReference type="DMDM" id="55976788"/>
<dbReference type="PaxDb" id="9606-ENSP00000384887"/>
<dbReference type="PeptideAtlas" id="Q7Z692"/>
<dbReference type="Antibodypedia" id="53999">
    <property type="antibodies" value="135 antibodies from 21 providers"/>
</dbReference>
<dbReference type="DNASU" id="56971"/>
<dbReference type="Ensembl" id="ENST00000358777.10">
    <molecule id="Q7Z692-3"/>
    <property type="protein sequence ID" value="ENSP00000351627.4"/>
    <property type="gene ID" value="ENSG00000186567.14"/>
</dbReference>
<dbReference type="Ensembl" id="ENST00000403660.3">
    <molecule id="Q7Z692-1"/>
    <property type="protein sequence ID" value="ENSP00000384887.3"/>
    <property type="gene ID" value="ENSG00000186567.14"/>
</dbReference>
<dbReference type="GeneID" id="56971"/>
<dbReference type="KEGG" id="hsa:56971"/>
<dbReference type="MANE-Select" id="ENST00000358777.10">
    <molecule id="Q7Z692-3"/>
    <property type="protein sequence ID" value="ENSP00000351627.4"/>
    <property type="RefSeq nucleotide sequence ID" value="NM_001127893.3"/>
    <property type="RefSeq protein sequence ID" value="NP_001121365.1"/>
</dbReference>
<dbReference type="UCSC" id="uc002ozo.5">
    <molecule id="Q7Z692-1"/>
    <property type="organism name" value="human"/>
</dbReference>
<dbReference type="AGR" id="HGNC:31951"/>
<dbReference type="CTD" id="56971"/>
<dbReference type="DisGeNET" id="56971"/>
<dbReference type="GeneCards" id="CEACAM19"/>
<dbReference type="HGNC" id="HGNC:31951">
    <property type="gene designation" value="CEACAM19"/>
</dbReference>
<dbReference type="HPA" id="ENSG00000186567">
    <property type="expression patterns" value="Low tissue specificity"/>
</dbReference>
<dbReference type="MIM" id="606691">
    <property type="type" value="gene"/>
</dbReference>
<dbReference type="neXtProt" id="NX_Q7Z692"/>
<dbReference type="OpenTargets" id="ENSG00000186567"/>
<dbReference type="PharmGKB" id="PA142672133"/>
<dbReference type="VEuPathDB" id="HostDB:ENSG00000186567"/>
<dbReference type="eggNOG" id="ENOG502SP3N">
    <property type="taxonomic scope" value="Eukaryota"/>
</dbReference>
<dbReference type="GeneTree" id="ENSGT01130000278319"/>
<dbReference type="HOGENOM" id="CLU_081012_0_0_1"/>
<dbReference type="InParanoid" id="Q7Z692"/>
<dbReference type="OMA" id="ENHHYQD"/>
<dbReference type="OrthoDB" id="9048100at2759"/>
<dbReference type="PAN-GO" id="Q7Z692">
    <property type="GO annotations" value="2 GO annotations based on evolutionary models"/>
</dbReference>
<dbReference type="PhylomeDB" id="Q7Z692"/>
<dbReference type="TreeFam" id="TF352070"/>
<dbReference type="PathwayCommons" id="Q7Z692"/>
<dbReference type="SignaLink" id="Q7Z692"/>
<dbReference type="BioGRID-ORCS" id="56971">
    <property type="hits" value="12 hits in 1149 CRISPR screens"/>
</dbReference>
<dbReference type="GenomeRNAi" id="56971"/>
<dbReference type="Pharos" id="Q7Z692">
    <property type="development level" value="Tbio"/>
</dbReference>
<dbReference type="PRO" id="PR:Q7Z692"/>
<dbReference type="Proteomes" id="UP000005640">
    <property type="component" value="Chromosome 19"/>
</dbReference>
<dbReference type="RNAct" id="Q7Z692">
    <property type="molecule type" value="protein"/>
</dbReference>
<dbReference type="Bgee" id="ENSG00000186567">
    <property type="expression patterns" value="Expressed in apex of heart and 100 other cell types or tissues"/>
</dbReference>
<dbReference type="ExpressionAtlas" id="Q7Z692">
    <property type="expression patterns" value="baseline and differential"/>
</dbReference>
<dbReference type="GO" id="GO:0016020">
    <property type="term" value="C:membrane"/>
    <property type="evidence" value="ECO:0007669"/>
    <property type="project" value="UniProtKB-SubCell"/>
</dbReference>
<dbReference type="Gene3D" id="2.60.40.10">
    <property type="entry name" value="Immunoglobulins"/>
    <property type="match status" value="1"/>
</dbReference>
<dbReference type="InterPro" id="IPR050831">
    <property type="entry name" value="CEA_cell_adhesion"/>
</dbReference>
<dbReference type="InterPro" id="IPR036179">
    <property type="entry name" value="Ig-like_dom_sf"/>
</dbReference>
<dbReference type="InterPro" id="IPR013783">
    <property type="entry name" value="Ig-like_fold"/>
</dbReference>
<dbReference type="InterPro" id="IPR013106">
    <property type="entry name" value="Ig_V-set"/>
</dbReference>
<dbReference type="PANTHER" id="PTHR44427">
    <property type="entry name" value="CARCINOEMBRYONIC ANTIGEN-RELATED CELL ADHESION MOLECULE 19"/>
    <property type="match status" value="1"/>
</dbReference>
<dbReference type="PANTHER" id="PTHR44427:SF21">
    <property type="entry name" value="CEA CELL ADHESION MOLECULE 19"/>
    <property type="match status" value="1"/>
</dbReference>
<dbReference type="Pfam" id="PF07686">
    <property type="entry name" value="V-set"/>
    <property type="match status" value="1"/>
</dbReference>
<dbReference type="SUPFAM" id="SSF48726">
    <property type="entry name" value="Immunoglobulin"/>
    <property type="match status" value="1"/>
</dbReference>
<gene>
    <name evidence="8" type="primary">CEACAM19</name>
    <name evidence="4" type="synonym">CEAL1</name>
    <name type="ORF">UNQ2973/PRO7436</name>
</gene>
<feature type="signal peptide" evidence="1">
    <location>
        <begin position="1"/>
        <end position="32"/>
    </location>
</feature>
<feature type="chain" id="PRO_0000014576" description="Cell adhesion molecule CEACAM19">
    <location>
        <begin position="33"/>
        <end position="300"/>
    </location>
</feature>
<feature type="topological domain" description="Extracellular" evidence="1">
    <location>
        <begin position="33"/>
        <end position="157"/>
    </location>
</feature>
<feature type="transmembrane region" description="Helical" evidence="1">
    <location>
        <begin position="158"/>
        <end position="178"/>
    </location>
</feature>
<feature type="topological domain" description="Cytoplasmic" evidence="1">
    <location>
        <begin position="179"/>
        <end position="300"/>
    </location>
</feature>
<feature type="region of interest" description="Disordered" evidence="2">
    <location>
        <begin position="259"/>
        <end position="291"/>
    </location>
</feature>
<feature type="glycosylation site" description="N-linked (GlcNAc...) asparagine" evidence="1">
    <location>
        <position position="104"/>
    </location>
</feature>
<feature type="splice variant" id="VSP_010708" description="In isoform 2." evidence="7">
    <original>E</original>
    <variation>D</variation>
    <location>
        <position position="142"/>
    </location>
</feature>
<feature type="splice variant" id="VSP_010709" description="In isoform 2." evidence="7">
    <location>
        <begin position="143"/>
        <end position="300"/>
    </location>
</feature>
<feature type="splice variant" id="VSP_043228" description="In isoform 3." evidence="5 6">
    <location>
        <position position="282"/>
    </location>
</feature>
<accession>Q7Z692</accession>
<accession>Q5XJ15</accession>
<accession>Q7Z693</accession>
<protein>
    <recommendedName>
        <fullName evidence="7">Cell adhesion molecule CEACAM19</fullName>
    </recommendedName>
    <alternativeName>
        <fullName>Carcinoembryonic antigen-like 1</fullName>
    </alternativeName>
    <alternativeName>
        <fullName>Carcinoembryonic antigen-related cell adhesion molecule 19</fullName>
        <shortName evidence="8">CEA cell adhesion molecule 19</shortName>
    </alternativeName>
</protein>
<comment type="subcellular location">
    <subcellularLocation>
        <location evidence="7">Membrane</location>
        <topology evidence="7">Single-pass type I membrane protein</topology>
    </subcellularLocation>
</comment>
<comment type="alternative products">
    <event type="alternative splicing"/>
    <isoform>
        <id>Q7Z692-1</id>
        <name>1</name>
        <sequence type="displayed"/>
    </isoform>
    <isoform>
        <id>Q7Z692-2</id>
        <name>2</name>
        <sequence type="described" ref="VSP_010708 VSP_010709"/>
    </isoform>
    <isoform>
        <id>Q7Z692-3</id>
        <name>3</name>
        <sequence type="described" ref="VSP_043228"/>
    </isoform>
</comment>
<comment type="tissue specificity">
    <text evidence="3">Ubiquitous with highest expression in prostate, uterus, fetal brain, mammary gland, adrenal gland, skeletal muscle, small intestine, and kidney, and lower expression in lung, cerebellum, testis, liver, pancreas, bone marrow and ovary.</text>
</comment>
<comment type="induction">
    <text>Down-regulated by dexamethasone (in vitro).</text>
</comment>
<comment type="similarity">
    <text evidence="7">Belongs to the immunoglobulin superfamily. CEA family.</text>
</comment>
<comment type="sequence caution" evidence="7">
    <conflict type="erroneous initiation">
        <sequence resource="EMBL-CDS" id="AAP70002"/>
    </conflict>
</comment>
<comment type="sequence caution" evidence="7">
    <conflict type="erroneous initiation">
        <sequence resource="EMBL-CDS" id="AAP70003"/>
    </conflict>
</comment>
<name>CEA19_HUMAN</name>
<sequence length="300" mass="32638">MEIPMGTQGCFSKSLLLSASILVLWMLQGSQAALYIQKIPEQPQKNQDLLLSVQGVPDTFQDFNWYLGEETYGGTRLFTYIPGIQRPQRDGSAMGQRDIVGFPNGSMLLRRAQPTDSGTYQVAITINSEWTMKAKTEVQVAEKNKELPSTHLPTNAGILAATIIGSLAAGALLISCIAYLLVTRNWRGQSHRLPAPRGQGSLSILCSAVSPVPSVTPSTWMATTEKPELGPAHDAGDNNIYEVMPSPVLLVSPISDTRSINPARPLPTPPHLQAEPENHQYQQDLLNPDPAPYCQLVPTS</sequence>